<keyword id="KW-0456">Lyase</keyword>
<keyword id="KW-0460">Magnesium</keyword>
<keyword id="KW-0479">Metal-binding</keyword>
<proteinExistence type="evidence at protein level"/>
<accession>A0A4Y5QWA6</accession>
<dbReference type="EC" id="4.2.3.-" evidence="3"/>
<dbReference type="EC" id="4.2.3.25" evidence="3"/>
<dbReference type="EMBL" id="MK801764">
    <property type="protein sequence ID" value="QCY41292.1"/>
    <property type="molecule type" value="mRNA"/>
</dbReference>
<dbReference type="SMR" id="A0A4Y5QWA6"/>
<dbReference type="UniPathway" id="UPA00213"/>
<dbReference type="Proteomes" id="UP000596661">
    <property type="component" value="Unplaced"/>
</dbReference>
<dbReference type="GO" id="GO:0000287">
    <property type="term" value="F:magnesium ion binding"/>
    <property type="evidence" value="ECO:0007669"/>
    <property type="project" value="InterPro"/>
</dbReference>
<dbReference type="GO" id="GO:0010333">
    <property type="term" value="F:terpene synthase activity"/>
    <property type="evidence" value="ECO:0007669"/>
    <property type="project" value="InterPro"/>
</dbReference>
<dbReference type="GO" id="GO:0016102">
    <property type="term" value="P:diterpenoid biosynthetic process"/>
    <property type="evidence" value="ECO:0007669"/>
    <property type="project" value="InterPro"/>
</dbReference>
<dbReference type="CDD" id="cd00684">
    <property type="entry name" value="Terpene_cyclase_plant_C1"/>
    <property type="match status" value="1"/>
</dbReference>
<dbReference type="Gene3D" id="1.10.600.10">
    <property type="entry name" value="Farnesyl Diphosphate Synthase"/>
    <property type="match status" value="1"/>
</dbReference>
<dbReference type="Gene3D" id="1.50.10.130">
    <property type="entry name" value="Terpene synthase, N-terminal domain"/>
    <property type="match status" value="1"/>
</dbReference>
<dbReference type="InterPro" id="IPR008949">
    <property type="entry name" value="Isoprenoid_synthase_dom_sf"/>
</dbReference>
<dbReference type="InterPro" id="IPR034741">
    <property type="entry name" value="Terpene_cyclase-like_1_C"/>
</dbReference>
<dbReference type="InterPro" id="IPR044814">
    <property type="entry name" value="Terpene_cyclase_plant_C1"/>
</dbReference>
<dbReference type="InterPro" id="IPR001906">
    <property type="entry name" value="Terpene_synth_N"/>
</dbReference>
<dbReference type="InterPro" id="IPR036965">
    <property type="entry name" value="Terpene_synth_N_sf"/>
</dbReference>
<dbReference type="InterPro" id="IPR050148">
    <property type="entry name" value="Terpene_synthase-like"/>
</dbReference>
<dbReference type="InterPro" id="IPR005630">
    <property type="entry name" value="Terpene_synthase_metal-bd"/>
</dbReference>
<dbReference type="InterPro" id="IPR008930">
    <property type="entry name" value="Terpenoid_cyclase/PrenylTrfase"/>
</dbReference>
<dbReference type="PANTHER" id="PTHR31225">
    <property type="entry name" value="OS04G0344100 PROTEIN-RELATED"/>
    <property type="match status" value="1"/>
</dbReference>
<dbReference type="PANTHER" id="PTHR31225:SF0">
    <property type="entry name" value="S-(+)-LINALOOL SYNTHASE, CHLOROPLASTIC"/>
    <property type="match status" value="1"/>
</dbReference>
<dbReference type="Pfam" id="PF01397">
    <property type="entry name" value="Terpene_synth"/>
    <property type="match status" value="1"/>
</dbReference>
<dbReference type="Pfam" id="PF03936">
    <property type="entry name" value="Terpene_synth_C"/>
    <property type="match status" value="1"/>
</dbReference>
<dbReference type="SFLD" id="SFLDS00005">
    <property type="entry name" value="Isoprenoid_Synthase_Type_I"/>
    <property type="match status" value="1"/>
</dbReference>
<dbReference type="SFLD" id="SFLDG01019">
    <property type="entry name" value="Terpene_Cyclase_Like_1_C_Termi"/>
    <property type="match status" value="1"/>
</dbReference>
<dbReference type="SUPFAM" id="SSF48239">
    <property type="entry name" value="Terpenoid cyclases/Protein prenyltransferases"/>
    <property type="match status" value="1"/>
</dbReference>
<dbReference type="SUPFAM" id="SSF48576">
    <property type="entry name" value="Terpenoid synthases"/>
    <property type="match status" value="1"/>
</dbReference>
<sequence length="554" mass="64371">MALSIMSSYASFRPFKPSSSLSSSQNIIRNFDENSKYHIRSNGDLTPQKDLDKYRDVLRKADPFDEGLKMIDAIQRLGIDYIFEEEIDKIIQSQSAYKFFREFEHDHHHHQDLYDVALRFRLLRQHGLFVPADIFNKYKDNNKGCFDTRLREDIKGLLSLYEASHLCIEGENILDEAALFSAQHLEASMTRLHRYDQYQAKFVATTLQNPTHKSLSKFTAKDLFGVYPSENGYINLFQQLAKVEFNRVQSLHRMEIDKVTRWWRDIGLAKELTFARDQPVKWYIWSMACLTDPILSKQRVALTKSISFIYVIDDIFDMYSSLDELILFTQAVSSWEYSAIQKLPDSMKTCFRALDNMINESSHTIYQKRGWSPLHSLRKTWASLCEAFLVEAKWFASRHVPKAKEYLENGVVSSGVHVVLVHIFVLLDETSLTQKTLDFVENMPSIITSTASILRLWDDFGSAKDENQEGHDGSYVECYMKELGGSVEDAREEMMEKISDAWKCLNKECILRNPAFPPPFLKASLNLARLVPLMYNYDHNQRLPHLEEHIKSLL</sequence>
<comment type="function">
    <text evidence="3">Involved in sesquiterpene olefins biosynthesis, constituants of cannabinoids and terpenoids-rich resins (PubMed:31138625). Catalyzes primarily the conversion of (2E)-farnesyl diphosphate to (E)-nerolidol, and the conversion of (2E)-geranyl diphosphate to (+)linalool (PubMed:31138625).</text>
</comment>
<comment type="catalytic activity">
    <reaction evidence="3">
        <text>(2E,6E)-farnesyl diphosphate + H2O = (6E)-nerolidol + diphosphate</text>
        <dbReference type="Rhea" id="RHEA:56984"/>
        <dbReference type="ChEBI" id="CHEBI:15377"/>
        <dbReference type="ChEBI" id="CHEBI:33019"/>
        <dbReference type="ChEBI" id="CHEBI:141283"/>
        <dbReference type="ChEBI" id="CHEBI:175763"/>
    </reaction>
    <physiologicalReaction direction="left-to-right" evidence="3">
        <dbReference type="Rhea" id="RHEA:56985"/>
    </physiologicalReaction>
</comment>
<comment type="catalytic activity">
    <reaction evidence="3">
        <text>(2E)-geranyl diphosphate + H2O = (S)-linalool + diphosphate</text>
        <dbReference type="Rhea" id="RHEA:24116"/>
        <dbReference type="ChEBI" id="CHEBI:98"/>
        <dbReference type="ChEBI" id="CHEBI:15377"/>
        <dbReference type="ChEBI" id="CHEBI:33019"/>
        <dbReference type="ChEBI" id="CHEBI:58057"/>
        <dbReference type="EC" id="4.2.3.25"/>
    </reaction>
    <physiologicalReaction direction="left-to-right" evidence="3">
        <dbReference type="Rhea" id="RHEA:24117"/>
    </physiologicalReaction>
</comment>
<comment type="cofactor">
    <cofactor evidence="1">
        <name>Mg(2+)</name>
        <dbReference type="ChEBI" id="CHEBI:18420"/>
    </cofactor>
    <cofactor evidence="1">
        <name>Mn(2+)</name>
        <dbReference type="ChEBI" id="CHEBI:29035"/>
    </cofactor>
    <text evidence="1">Binds 3 Mg(2+) or Mn(2+) ions per subunit.</text>
</comment>
<comment type="pathway">
    <text evidence="3">Secondary metabolite biosynthesis; terpenoid biosynthesis.</text>
</comment>
<comment type="tissue specificity">
    <text evidence="3">Highly expressed in glandular trichomes.</text>
</comment>
<comment type="domain">
    <text evidence="2">The Asp-Asp-Xaa-Xaa-Asp/Glu (DDXXD/E) motif is important for the catalytic activity, presumably through binding to Mg(2+).</text>
</comment>
<comment type="similarity">
    <text evidence="5">Belongs to the terpene synthase family. Tpsb subfamily.</text>
</comment>
<organism>
    <name type="scientific">Cannabis sativa</name>
    <name type="common">Hemp</name>
    <name type="synonym">Marijuana</name>
    <dbReference type="NCBI Taxonomy" id="3483"/>
    <lineage>
        <taxon>Eukaryota</taxon>
        <taxon>Viridiplantae</taxon>
        <taxon>Streptophyta</taxon>
        <taxon>Embryophyta</taxon>
        <taxon>Tracheophyta</taxon>
        <taxon>Spermatophyta</taxon>
        <taxon>Magnoliopsida</taxon>
        <taxon>eudicotyledons</taxon>
        <taxon>Gunneridae</taxon>
        <taxon>Pentapetalae</taxon>
        <taxon>rosids</taxon>
        <taxon>fabids</taxon>
        <taxon>Rosales</taxon>
        <taxon>Cannabaceae</taxon>
        <taxon>Cannabis</taxon>
    </lineage>
</organism>
<feature type="chain" id="PRO_0000460908" description="(E)-nerolidol synthase TPS18VF">
    <location>
        <begin position="1"/>
        <end position="554"/>
    </location>
</feature>
<feature type="short sequence motif" description="DDXXD motif" evidence="2">
    <location>
        <begin position="313"/>
        <end position="317"/>
    </location>
</feature>
<feature type="binding site" evidence="2">
    <location>
        <position position="276"/>
    </location>
    <ligand>
        <name>(2E,6E)-farnesyl diphosphate</name>
        <dbReference type="ChEBI" id="CHEBI:175763"/>
    </ligand>
</feature>
<feature type="binding site" evidence="2">
    <location>
        <position position="313"/>
    </location>
    <ligand>
        <name>(2E,6E)-farnesyl diphosphate</name>
        <dbReference type="ChEBI" id="CHEBI:175763"/>
    </ligand>
</feature>
<feature type="binding site" evidence="2">
    <location>
        <position position="313"/>
    </location>
    <ligand>
        <name>Mg(2+)</name>
        <dbReference type="ChEBI" id="CHEBI:18420"/>
        <label>1</label>
    </ligand>
</feature>
<feature type="binding site" evidence="2">
    <location>
        <position position="313"/>
    </location>
    <ligand>
        <name>Mg(2+)</name>
        <dbReference type="ChEBI" id="CHEBI:18420"/>
        <label>2</label>
    </ligand>
</feature>
<feature type="binding site" evidence="2">
    <location>
        <position position="317"/>
    </location>
    <ligand>
        <name>(2E,6E)-farnesyl diphosphate</name>
        <dbReference type="ChEBI" id="CHEBI:175763"/>
    </ligand>
</feature>
<feature type="binding site" evidence="2">
    <location>
        <position position="317"/>
    </location>
    <ligand>
        <name>Mg(2+)</name>
        <dbReference type="ChEBI" id="CHEBI:18420"/>
        <label>1</label>
    </ligand>
</feature>
<feature type="binding site" evidence="2">
    <location>
        <position position="317"/>
    </location>
    <ligand>
        <name>Mg(2+)</name>
        <dbReference type="ChEBI" id="CHEBI:18420"/>
        <label>2</label>
    </ligand>
</feature>
<feature type="binding site" evidence="2">
    <location>
        <position position="455"/>
    </location>
    <ligand>
        <name>(2E,6E)-farnesyl diphosphate</name>
        <dbReference type="ChEBI" id="CHEBI:175763"/>
    </ligand>
</feature>
<feature type="binding site" evidence="2">
    <location>
        <position position="458"/>
    </location>
    <ligand>
        <name>(2E,6E)-farnesyl diphosphate</name>
        <dbReference type="ChEBI" id="CHEBI:175763"/>
    </ligand>
</feature>
<feature type="binding site" evidence="2">
    <location>
        <position position="458"/>
    </location>
    <ligand>
        <name>Mg(2+)</name>
        <dbReference type="ChEBI" id="CHEBI:18420"/>
        <label>3</label>
    </ligand>
</feature>
<feature type="binding site" evidence="2">
    <location>
        <position position="462"/>
    </location>
    <ligand>
        <name>Mg(2+)</name>
        <dbReference type="ChEBI" id="CHEBI:18420"/>
        <label>3</label>
    </ligand>
</feature>
<feature type="binding site" evidence="2">
    <location>
        <position position="466"/>
    </location>
    <ligand>
        <name>Mg(2+)</name>
        <dbReference type="ChEBI" id="CHEBI:18420"/>
        <label>3</label>
    </ligand>
</feature>
<name>T18VF_CANSA</name>
<evidence type="ECO:0000250" key="1">
    <source>
        <dbReference type="UniProtKB" id="A0A1C9J6A7"/>
    </source>
</evidence>
<evidence type="ECO:0000250" key="2">
    <source>
        <dbReference type="UniProtKB" id="Q40577"/>
    </source>
</evidence>
<evidence type="ECO:0000269" key="3">
    <source>
    </source>
</evidence>
<evidence type="ECO:0000303" key="4">
    <source>
    </source>
</evidence>
<evidence type="ECO:0000305" key="5"/>
<gene>
    <name evidence="4" type="primary">TPS18VF</name>
</gene>
<protein>
    <recommendedName>
        <fullName evidence="4">(E)-nerolidol synthase TPS18VF</fullName>
        <ecNumber evidence="3">4.2.3.-</ecNumber>
    </recommendedName>
    <alternativeName>
        <fullName evidence="4">(S)linalool synthase TPS18VF</fullName>
        <shortName>(+)linalool</shortName>
        <ecNumber evidence="3">4.2.3.25</ecNumber>
    </alternativeName>
    <alternativeName>
        <fullName evidence="4">Terpene synthase 18 VF</fullName>
        <shortName evidence="4">CsTPS18VF</shortName>
    </alternativeName>
</protein>
<reference key="1">
    <citation type="journal article" date="2019" name="Plant Physiol.">
        <title>Gene networks underlying cannabinoid and terpenoid accumulation in cannabis.</title>
        <authorList>
            <person name="Zager J.J."/>
            <person name="Lange I."/>
            <person name="Srividya N."/>
            <person name="Smith A."/>
            <person name="Lange B.M."/>
        </authorList>
    </citation>
    <scope>NUCLEOTIDE SEQUENCE [MRNA]</scope>
    <scope>FUNCTION</scope>
    <scope>CATALYTIC ACTIVITY</scope>
    <scope>PATHWAY</scope>
    <scope>TISSUE SPECIFICITY</scope>
    <source>
        <strain>cv. Black Lime</strain>
        <strain>cv. Blackberry Kush</strain>
        <strain>cv. Canna Tsu</strain>
        <strain>cv. Cherry Chem</strain>
        <strain>cv. Mama Thai</strain>
        <strain>cv. Sour Diesel</strain>
        <strain>cv. Terple</strain>
        <strain>cv. Valley Fire</strain>
        <strain>cv. White Cookies</strain>
        <tissue>Trichome gland</tissue>
    </source>
</reference>